<keyword id="KW-0002">3D-structure</keyword>
<keyword id="KW-0256">Endoplasmic reticulum</keyword>
<keyword id="KW-0325">Glycoprotein</keyword>
<keyword id="KW-0653">Protein transport</keyword>
<keyword id="KW-1185">Reference proteome</keyword>
<keyword id="KW-0732">Signal</keyword>
<keyword id="KW-0811">Translocation</keyword>
<keyword id="KW-0813">Transport</keyword>
<gene>
    <name type="primary">SIL1</name>
    <name type="synonym">PER100</name>
    <name type="synonym">SLS1</name>
    <name type="ordered locus">YOL031C</name>
</gene>
<evidence type="ECO:0000255" key="1"/>
<evidence type="ECO:0000255" key="2">
    <source>
        <dbReference type="PROSITE-ProRule" id="PRU10138"/>
    </source>
</evidence>
<evidence type="ECO:0000269" key="3">
    <source>
    </source>
</evidence>
<evidence type="ECO:0000269" key="4">
    <source>
    </source>
</evidence>
<evidence type="ECO:0000269" key="5">
    <source>
    </source>
</evidence>
<evidence type="ECO:0000269" key="6">
    <source>
    </source>
</evidence>
<evidence type="ECO:0000269" key="7">
    <source>
    </source>
</evidence>
<evidence type="ECO:0000269" key="8">
    <source>
    </source>
</evidence>
<evidence type="ECO:0000305" key="9"/>
<evidence type="ECO:0007829" key="10">
    <source>
        <dbReference type="PDB" id="3QML"/>
    </source>
</evidence>
<reference key="1">
    <citation type="journal article" date="1997" name="Nature">
        <title>The nucleotide sequence of Saccharomyces cerevisiae chromosome XV.</title>
        <authorList>
            <person name="Dujon B."/>
            <person name="Albermann K."/>
            <person name="Aldea M."/>
            <person name="Alexandraki D."/>
            <person name="Ansorge W."/>
            <person name="Arino J."/>
            <person name="Benes V."/>
            <person name="Bohn C."/>
            <person name="Bolotin-Fukuhara M."/>
            <person name="Bordonne R."/>
            <person name="Boyer J."/>
            <person name="Camasses A."/>
            <person name="Casamayor A."/>
            <person name="Casas C."/>
            <person name="Cheret G."/>
            <person name="Cziepluch C."/>
            <person name="Daignan-Fornier B."/>
            <person name="Dang V.-D."/>
            <person name="de Haan M."/>
            <person name="Delius H."/>
            <person name="Durand P."/>
            <person name="Fairhead C."/>
            <person name="Feldmann H."/>
            <person name="Gaillon L."/>
            <person name="Galisson F."/>
            <person name="Gamo F.-J."/>
            <person name="Gancedo C."/>
            <person name="Goffeau A."/>
            <person name="Goulding S.E."/>
            <person name="Grivell L.A."/>
            <person name="Habbig B."/>
            <person name="Hand N.J."/>
            <person name="Hani J."/>
            <person name="Hattenhorst U."/>
            <person name="Hebling U."/>
            <person name="Hernando Y."/>
            <person name="Herrero E."/>
            <person name="Heumann K."/>
            <person name="Hiesel R."/>
            <person name="Hilger F."/>
            <person name="Hofmann B."/>
            <person name="Hollenberg C.P."/>
            <person name="Hughes B."/>
            <person name="Jauniaux J.-C."/>
            <person name="Kalogeropoulos A."/>
            <person name="Katsoulou C."/>
            <person name="Kordes E."/>
            <person name="Lafuente M.J."/>
            <person name="Landt O."/>
            <person name="Louis E.J."/>
            <person name="Maarse A.C."/>
            <person name="Madania A."/>
            <person name="Mannhaupt G."/>
            <person name="Marck C."/>
            <person name="Martin R.P."/>
            <person name="Mewes H.-W."/>
            <person name="Michaux G."/>
            <person name="Paces V."/>
            <person name="Parle-McDermott A.G."/>
            <person name="Pearson B.M."/>
            <person name="Perrin A."/>
            <person name="Pettersson B."/>
            <person name="Poch O."/>
            <person name="Pohl T.M."/>
            <person name="Poirey R."/>
            <person name="Portetelle D."/>
            <person name="Pujol A."/>
            <person name="Purnelle B."/>
            <person name="Ramezani Rad M."/>
            <person name="Rechmann S."/>
            <person name="Schwager C."/>
            <person name="Schweizer M."/>
            <person name="Sor F."/>
            <person name="Sterky F."/>
            <person name="Tarassov I.A."/>
            <person name="Teodoru C."/>
            <person name="Tettelin H."/>
            <person name="Thierry A."/>
            <person name="Tobiasch E."/>
            <person name="Tzermia M."/>
            <person name="Uhlen M."/>
            <person name="Unseld M."/>
            <person name="Valens M."/>
            <person name="Vandenbol M."/>
            <person name="Vetter I."/>
            <person name="Vlcek C."/>
            <person name="Voet M."/>
            <person name="Volckaert G."/>
            <person name="Voss H."/>
            <person name="Wambutt R."/>
            <person name="Wedler H."/>
            <person name="Wiemann S."/>
            <person name="Winsor B."/>
            <person name="Wolfe K.H."/>
            <person name="Zollner A."/>
            <person name="Zumstein E."/>
            <person name="Kleine K."/>
        </authorList>
    </citation>
    <scope>NUCLEOTIDE SEQUENCE [LARGE SCALE GENOMIC DNA]</scope>
    <source>
        <strain>ATCC 204508 / S288c</strain>
    </source>
</reference>
<reference key="2">
    <citation type="journal article" date="2014" name="G3 (Bethesda)">
        <title>The reference genome sequence of Saccharomyces cerevisiae: Then and now.</title>
        <authorList>
            <person name="Engel S.R."/>
            <person name="Dietrich F.S."/>
            <person name="Fisk D.G."/>
            <person name="Binkley G."/>
            <person name="Balakrishnan R."/>
            <person name="Costanzo M.C."/>
            <person name="Dwight S.S."/>
            <person name="Hitz B.C."/>
            <person name="Karra K."/>
            <person name="Nash R.S."/>
            <person name="Weng S."/>
            <person name="Wong E.D."/>
            <person name="Lloyd P."/>
            <person name="Skrzypek M.S."/>
            <person name="Miyasato S.R."/>
            <person name="Simison M."/>
            <person name="Cherry J.M."/>
        </authorList>
    </citation>
    <scope>GENOME REANNOTATION</scope>
    <source>
        <strain>ATCC 204508 / S288c</strain>
    </source>
</reference>
<reference key="3">
    <citation type="journal article" date="2007" name="Genome Res.">
        <title>Approaching a complete repository of sequence-verified protein-encoding clones for Saccharomyces cerevisiae.</title>
        <authorList>
            <person name="Hu Y."/>
            <person name="Rolfs A."/>
            <person name="Bhullar B."/>
            <person name="Murthy T.V.S."/>
            <person name="Zhu C."/>
            <person name="Berger M.F."/>
            <person name="Camargo A.A."/>
            <person name="Kelley F."/>
            <person name="McCarron S."/>
            <person name="Jepson D."/>
            <person name="Richardson A."/>
            <person name="Raphael J."/>
            <person name="Moreira D."/>
            <person name="Taycher E."/>
            <person name="Zuo D."/>
            <person name="Mohr S."/>
            <person name="Kane M.F."/>
            <person name="Williamson J."/>
            <person name="Simpson A.J.G."/>
            <person name="Bulyk M.L."/>
            <person name="Harlow E."/>
            <person name="Marsischky G."/>
            <person name="Kolodner R.D."/>
            <person name="LaBaer J."/>
        </authorList>
    </citation>
    <scope>NUCLEOTIDE SEQUENCE [GENOMIC DNA]</scope>
    <source>
        <strain>ATCC 204508 / S288c</strain>
    </source>
</reference>
<reference key="4">
    <citation type="journal article" date="2000" name="Cell">
        <title>Functional and genomic analyses reveal an essential coordination between the unfolded protein response and ER-associated degradation.</title>
        <authorList>
            <person name="Travers K.J."/>
            <person name="Patil C.K."/>
            <person name="Wodicka L."/>
            <person name="Lockhart D.J."/>
            <person name="Weissman J.S."/>
            <person name="Walter P."/>
        </authorList>
    </citation>
    <scope>INDUCTION</scope>
</reference>
<reference key="5">
    <citation type="journal article" date="2000" name="EMBO J.">
        <title>LHS1 and SIL1 provide a lumenal function that is essential for protein translocation into the endoplasmic reticulum.</title>
        <authorList>
            <person name="Tyson J.R."/>
            <person name="Stirling C.J."/>
        </authorList>
    </citation>
    <scope>FUNCTION</scope>
    <scope>INTERACTION WITH KAR2</scope>
</reference>
<reference key="6">
    <citation type="journal article" date="2000" name="Mol. Cell. Biol.">
        <title>Sls1p stimulates Sec63p-mediated activation of Kar2p in a conformation-dependent manner in the yeast endoplasmic reticulum.</title>
        <authorList>
            <person name="Kabani M."/>
            <person name="Beckerich J.-M."/>
            <person name="Gaillardin C."/>
        </authorList>
    </citation>
    <scope>FUNCTION</scope>
    <scope>INTERACTION WITH KAR2</scope>
    <scope>MUTAGENESIS OF 365-PHE--LEU-369</scope>
</reference>
<reference key="7">
    <citation type="journal article" date="2003" name="Nature">
        <title>Global analysis of protein expression in yeast.</title>
        <authorList>
            <person name="Ghaemmaghami S."/>
            <person name="Huh W.-K."/>
            <person name="Bower K."/>
            <person name="Howson R.W."/>
            <person name="Belle A."/>
            <person name="Dephoure N."/>
            <person name="O'Shea E.K."/>
            <person name="Weissman J.S."/>
        </authorList>
    </citation>
    <scope>LEVEL OF PROTEIN EXPRESSION [LARGE SCALE ANALYSIS]</scope>
</reference>
<reference key="8">
    <citation type="journal article" date="2004" name="Science">
        <title>Coordinated activation of Hsp70 chaperones.</title>
        <authorList>
            <person name="Steel G.J."/>
            <person name="Fullerton D.M."/>
            <person name="Tyson J.R."/>
            <person name="Stirling C.J."/>
        </authorList>
    </citation>
    <scope>FUNCTION</scope>
    <scope>INTERACTION WITH KAR2</scope>
</reference>
<reference key="9">
    <citation type="journal article" date="2009" name="Mol. Syst. Biol.">
        <title>Global analysis of the glycoproteome in Saccharomyces cerevisiae reveals new roles for protein glycosylation in eukaryotes.</title>
        <authorList>
            <person name="Kung L.A."/>
            <person name="Tao S.-C."/>
            <person name="Qian J."/>
            <person name="Smith M.G."/>
            <person name="Snyder M."/>
            <person name="Zhu H."/>
        </authorList>
    </citation>
    <scope>GLYCOSYLATION [LARGE SCALE ANALYSIS]</scope>
</reference>
<organism>
    <name type="scientific">Saccharomyces cerevisiae (strain ATCC 204508 / S288c)</name>
    <name type="common">Baker's yeast</name>
    <dbReference type="NCBI Taxonomy" id="559292"/>
    <lineage>
        <taxon>Eukaryota</taxon>
        <taxon>Fungi</taxon>
        <taxon>Dikarya</taxon>
        <taxon>Ascomycota</taxon>
        <taxon>Saccharomycotina</taxon>
        <taxon>Saccharomycetes</taxon>
        <taxon>Saccharomycetales</taxon>
        <taxon>Saccharomycetaceae</taxon>
        <taxon>Saccharomyces</taxon>
    </lineage>
</organism>
<dbReference type="EMBL" id="Z74773">
    <property type="protein sequence ID" value="CAA99031.1"/>
    <property type="molecule type" value="Genomic_DNA"/>
</dbReference>
<dbReference type="EMBL" id="AY693101">
    <property type="protein sequence ID" value="AAT93120.1"/>
    <property type="molecule type" value="Genomic_DNA"/>
</dbReference>
<dbReference type="EMBL" id="BK006948">
    <property type="protein sequence ID" value="DAA10750.1"/>
    <property type="molecule type" value="Genomic_DNA"/>
</dbReference>
<dbReference type="PIR" id="S66714">
    <property type="entry name" value="S66714"/>
</dbReference>
<dbReference type="RefSeq" id="NP_014611.1">
    <property type="nucleotide sequence ID" value="NM_001183285.1"/>
</dbReference>
<dbReference type="PDB" id="3QML">
    <property type="method" value="X-ray"/>
    <property type="resolution" value="2.31 A"/>
    <property type="chains" value="C/D=113-421"/>
</dbReference>
<dbReference type="PDBsum" id="3QML"/>
<dbReference type="SMR" id="Q08199"/>
<dbReference type="BioGRID" id="34369">
    <property type="interactions" value="137"/>
</dbReference>
<dbReference type="DIP" id="DIP-2622N"/>
<dbReference type="FunCoup" id="Q08199">
    <property type="interactions" value="243"/>
</dbReference>
<dbReference type="IntAct" id="Q08199">
    <property type="interactions" value="7"/>
</dbReference>
<dbReference type="MINT" id="Q08199"/>
<dbReference type="STRING" id="4932.YOL031C"/>
<dbReference type="GlyCosmos" id="Q08199">
    <property type="glycosylation" value="6 sites, No reported glycans"/>
</dbReference>
<dbReference type="GlyGen" id="Q08199">
    <property type="glycosylation" value="6 sites"/>
</dbReference>
<dbReference type="iPTMnet" id="Q08199"/>
<dbReference type="PaxDb" id="4932-YOL031C"/>
<dbReference type="PeptideAtlas" id="Q08199"/>
<dbReference type="EnsemblFungi" id="YOL031C_mRNA">
    <property type="protein sequence ID" value="YOL031C"/>
    <property type="gene ID" value="YOL031C"/>
</dbReference>
<dbReference type="GeneID" id="854126"/>
<dbReference type="KEGG" id="sce:YOL031C"/>
<dbReference type="AGR" id="SGD:S000005391"/>
<dbReference type="SGD" id="S000005391">
    <property type="gene designation" value="SIL1"/>
</dbReference>
<dbReference type="VEuPathDB" id="FungiDB:YOL031C"/>
<dbReference type="eggNOG" id="KOG2160">
    <property type="taxonomic scope" value="Eukaryota"/>
</dbReference>
<dbReference type="HOGENOM" id="CLU_034955_0_0_1"/>
<dbReference type="InParanoid" id="Q08199"/>
<dbReference type="OMA" id="GLDIRMN"/>
<dbReference type="OrthoDB" id="448649at2759"/>
<dbReference type="BioCyc" id="YEAST:G3O-33447-MONOMER"/>
<dbReference type="BioGRID-ORCS" id="854126">
    <property type="hits" value="1 hit in 10 CRISPR screens"/>
</dbReference>
<dbReference type="EvolutionaryTrace" id="Q08199"/>
<dbReference type="PRO" id="PR:Q08199"/>
<dbReference type="Proteomes" id="UP000002311">
    <property type="component" value="Chromosome XV"/>
</dbReference>
<dbReference type="RNAct" id="Q08199">
    <property type="molecule type" value="protein"/>
</dbReference>
<dbReference type="GO" id="GO:0005783">
    <property type="term" value="C:endoplasmic reticulum"/>
    <property type="evidence" value="ECO:0007005"/>
    <property type="project" value="SGD"/>
</dbReference>
<dbReference type="GO" id="GO:0005788">
    <property type="term" value="C:endoplasmic reticulum lumen"/>
    <property type="evidence" value="ECO:0007669"/>
    <property type="project" value="UniProtKB-SubCell"/>
</dbReference>
<dbReference type="GO" id="GO:0000774">
    <property type="term" value="F:adenyl-nucleotide exchange factor activity"/>
    <property type="evidence" value="ECO:0000314"/>
    <property type="project" value="SGD"/>
</dbReference>
<dbReference type="GO" id="GO:0006616">
    <property type="term" value="P:SRP-dependent cotranslational protein targeting to membrane, translocation"/>
    <property type="evidence" value="ECO:0000315"/>
    <property type="project" value="SGD"/>
</dbReference>
<dbReference type="Gene3D" id="1.25.10.10">
    <property type="entry name" value="Leucine-rich Repeat Variant"/>
    <property type="match status" value="1"/>
</dbReference>
<dbReference type="InterPro" id="IPR011989">
    <property type="entry name" value="ARM-like"/>
</dbReference>
<dbReference type="InterPro" id="IPR031884">
    <property type="entry name" value="Sil1_fungi"/>
</dbReference>
<dbReference type="Pfam" id="PF16782">
    <property type="entry name" value="SIL1"/>
    <property type="match status" value="1"/>
</dbReference>
<dbReference type="PROSITE" id="PS00014">
    <property type="entry name" value="ER_TARGET"/>
    <property type="match status" value="1"/>
</dbReference>
<feature type="signal peptide" evidence="1">
    <location>
        <begin position="1"/>
        <end position="19"/>
    </location>
</feature>
<feature type="chain" id="PRO_0000223364" description="Nucleotide exchange factor SIL1">
    <location>
        <begin position="20"/>
        <end position="421"/>
    </location>
</feature>
<feature type="short sequence motif" description="Prevents secretion from ER" evidence="2">
    <location>
        <begin position="418"/>
        <end position="421"/>
    </location>
</feature>
<feature type="glycosylation site" description="N-linked (GlcNAc...) asparagine" evidence="1">
    <location>
        <position position="105"/>
    </location>
</feature>
<feature type="glycosylation site" description="N-linked (GlcNAc...) asparagine" evidence="1">
    <location>
        <position position="181"/>
    </location>
</feature>
<feature type="glycosylation site" description="N-linked (GlcNAc...) asparagine" evidence="1">
    <location>
        <position position="215"/>
    </location>
</feature>
<feature type="glycosylation site" description="N-linked (GlcNAc...) asparagine" evidence="1">
    <location>
        <position position="233"/>
    </location>
</feature>
<feature type="glycosylation site" description="N-linked (GlcNAc...) asparagine" evidence="1">
    <location>
        <position position="315"/>
    </location>
</feature>
<feature type="glycosylation site" description="N-linked (GlcNAc...) asparagine" evidence="1">
    <location>
        <position position="333"/>
    </location>
</feature>
<feature type="mutagenesis site" description="Abrogates interaction with KAR2." evidence="4">
    <location>
        <begin position="365"/>
        <end position="369"/>
    </location>
</feature>
<feature type="sequence conflict" description="In Ref. 3; AAT93120." evidence="9" ref="3">
    <original>I</original>
    <variation>T</variation>
    <location>
        <position position="51"/>
    </location>
</feature>
<feature type="helix" evidence="10">
    <location>
        <begin position="127"/>
        <end position="139"/>
    </location>
</feature>
<feature type="helix" evidence="10">
    <location>
        <begin position="145"/>
        <end position="158"/>
    </location>
</feature>
<feature type="helix" evidence="10">
    <location>
        <begin position="159"/>
        <end position="161"/>
    </location>
</feature>
<feature type="helix" evidence="10">
    <location>
        <begin position="165"/>
        <end position="184"/>
    </location>
</feature>
<feature type="helix" evidence="10">
    <location>
        <begin position="190"/>
        <end position="204"/>
    </location>
</feature>
<feature type="helix" evidence="10">
    <location>
        <begin position="208"/>
        <end position="217"/>
    </location>
</feature>
<feature type="helix" evidence="10">
    <location>
        <begin position="221"/>
        <end position="233"/>
    </location>
</feature>
<feature type="helix" evidence="10">
    <location>
        <begin position="241"/>
        <end position="253"/>
    </location>
</feature>
<feature type="helix" evidence="10">
    <location>
        <begin position="266"/>
        <end position="275"/>
    </location>
</feature>
<feature type="turn" evidence="10">
    <location>
        <begin position="276"/>
        <end position="278"/>
    </location>
</feature>
<feature type="helix" evidence="10">
    <location>
        <begin position="280"/>
        <end position="297"/>
    </location>
</feature>
<feature type="helix" evidence="10">
    <location>
        <begin position="306"/>
        <end position="316"/>
    </location>
</feature>
<feature type="helix" evidence="10">
    <location>
        <begin position="321"/>
        <end position="331"/>
    </location>
</feature>
<feature type="helix" evidence="10">
    <location>
        <begin position="338"/>
        <end position="355"/>
    </location>
</feature>
<feature type="helix" evidence="10">
    <location>
        <begin position="356"/>
        <end position="358"/>
    </location>
</feature>
<feature type="helix" evidence="10">
    <location>
        <begin position="363"/>
        <end position="380"/>
    </location>
</feature>
<feature type="helix" evidence="10">
    <location>
        <begin position="389"/>
        <end position="402"/>
    </location>
</feature>
<feature type="turn" evidence="10">
    <location>
        <begin position="403"/>
        <end position="405"/>
    </location>
</feature>
<accession>Q08199</accession>
<accession>D6W234</accession>
<accession>Q6B1H9</accession>
<protein>
    <recommendedName>
        <fullName>Nucleotide exchange factor SIL1</fullName>
    </recommendedName>
    <alternativeName>
        <fullName>Protein SLS1</fullName>
    </alternativeName>
</protein>
<name>SIL1_YEAST</name>
<comment type="function">
    <text evidence="4 5 7">Required for protein translocation and folding in the endoplasmic reticulum (ER). Functions as a nucleotide exchange factor for the ER lumenal chaperone KAR2.</text>
</comment>
<comment type="subunit">
    <text evidence="4 5 7">Interacts with KAR2.</text>
</comment>
<comment type="subcellular location">
    <subcellularLocation>
        <location>Endoplasmic reticulum lumen</location>
    </subcellularLocation>
</comment>
<comment type="induction">
    <text evidence="3">By the unfolded protein response (UPR).</text>
</comment>
<comment type="PTM">
    <text evidence="8">N-glycosylated.</text>
</comment>
<comment type="miscellaneous">
    <text evidence="6">Present with 2420 molecules/cell in log phase SD medium.</text>
</comment>
<comment type="similarity">
    <text evidence="9">Belongs to the SIL1 family.</text>
</comment>
<proteinExistence type="evidence at protein level"/>
<sequence length="421" mass="48275">MVRILPIILSALSSKLVASTILHSSIHSVPSGGEIISAEDLKELEISGNSICVDNRCYPKIFEPRHDWQPILPGQELPGGLDIRINMDTGLKEAKLNDEKNVGDNGSHELIVSSEDMKASPGDYEFSSDFKEMRNIIDSNPTLSSQDIARLEDSFDRIMEFAHDYKHGYKIITHEFALLANLSLNENLPLTLRELSTRVITSCLRNNPPVVEFINESFPNFKSKIMAALSNLNDSNHRSSNILIKRYLSILNELPVTSEDLPIYSTVVLQNVYERNNKDKQLQIKVLELISKILKADMYENDDTNLILFKRNAENWSSNLQEWANEFQEMVQNKSIDELHTRTFFDTLYNLKKIFKSDITINKGFLNWLAQQCKARQSNLDNGLQERDTEQDSFDKKLIDSRHLIFGNPMAHRIKNFRDEL</sequence>